<protein>
    <recommendedName>
        <fullName evidence="1">Small ribosomal subunit protein uS5</fullName>
    </recommendedName>
    <alternativeName>
        <fullName evidence="2">30S ribosomal protein S5</fullName>
    </alternativeName>
</protein>
<comment type="function">
    <text evidence="1">With S4 and S12 plays an important role in translational accuracy.</text>
</comment>
<comment type="function">
    <text evidence="1">Located at the back of the 30S subunit body where it stabilizes the conformation of the head with respect to the body.</text>
</comment>
<comment type="subunit">
    <text evidence="1">Part of the 30S ribosomal subunit. Contacts proteins S4 and S8.</text>
</comment>
<comment type="domain">
    <text>The N-terminal domain interacts with the head of the 30S subunit; the C-terminal domain interacts with the body and contacts protein S4. The interaction surface between S4 and S5 is involved in control of translational fidelity.</text>
</comment>
<comment type="similarity">
    <text evidence="1">Belongs to the universal ribosomal protein uS5 family.</text>
</comment>
<reference key="1">
    <citation type="journal article" date="2003" name="J. Bacteriol.">
        <title>Complete genome sequence of the oral pathogenic bacterium Porphyromonas gingivalis strain W83.</title>
        <authorList>
            <person name="Nelson K.E."/>
            <person name="Fleischmann R.D."/>
            <person name="DeBoy R.T."/>
            <person name="Paulsen I.T."/>
            <person name="Fouts D.E."/>
            <person name="Eisen J.A."/>
            <person name="Daugherty S.C."/>
            <person name="Dodson R.J."/>
            <person name="Durkin A.S."/>
            <person name="Gwinn M.L."/>
            <person name="Haft D.H."/>
            <person name="Kolonay J.F."/>
            <person name="Nelson W.C."/>
            <person name="Mason T.M."/>
            <person name="Tallon L."/>
            <person name="Gray J."/>
            <person name="Granger D."/>
            <person name="Tettelin H."/>
            <person name="Dong H."/>
            <person name="Galvin J.L."/>
            <person name="Duncan M.J."/>
            <person name="Dewhirst F.E."/>
            <person name="Fraser C.M."/>
        </authorList>
    </citation>
    <scope>NUCLEOTIDE SEQUENCE [LARGE SCALE GENOMIC DNA]</scope>
    <source>
        <strain>ATCC BAA-308 / W83</strain>
    </source>
</reference>
<gene>
    <name evidence="1" type="primary">rpsE</name>
    <name type="ordered locus">PG_1921</name>
</gene>
<keyword id="KW-1185">Reference proteome</keyword>
<keyword id="KW-0687">Ribonucleoprotein</keyword>
<keyword id="KW-0689">Ribosomal protein</keyword>
<keyword id="KW-0694">RNA-binding</keyword>
<keyword id="KW-0699">rRNA-binding</keyword>
<accession>Q7MTN0</accession>
<feature type="chain" id="PRO_0000131569" description="Small ribosomal subunit protein uS5">
    <location>
        <begin position="1"/>
        <end position="172"/>
    </location>
</feature>
<feature type="domain" description="S5 DRBM" evidence="1">
    <location>
        <begin position="16"/>
        <end position="79"/>
    </location>
</feature>
<dbReference type="EMBL" id="AE015924">
    <property type="protein sequence ID" value="AAQ66902.1"/>
    <property type="molecule type" value="Genomic_DNA"/>
</dbReference>
<dbReference type="RefSeq" id="WP_004583581.1">
    <property type="nucleotide sequence ID" value="NC_002950.2"/>
</dbReference>
<dbReference type="SMR" id="Q7MTN0"/>
<dbReference type="STRING" id="242619.PG_1921"/>
<dbReference type="EnsemblBacteria" id="AAQ66902">
    <property type="protein sequence ID" value="AAQ66902"/>
    <property type="gene ID" value="PG_1921"/>
</dbReference>
<dbReference type="GeneID" id="57239579"/>
<dbReference type="KEGG" id="pgi:PG_1921"/>
<dbReference type="eggNOG" id="COG0098">
    <property type="taxonomic scope" value="Bacteria"/>
</dbReference>
<dbReference type="HOGENOM" id="CLU_065898_2_2_10"/>
<dbReference type="Proteomes" id="UP000000588">
    <property type="component" value="Chromosome"/>
</dbReference>
<dbReference type="GO" id="GO:0015935">
    <property type="term" value="C:small ribosomal subunit"/>
    <property type="evidence" value="ECO:0007669"/>
    <property type="project" value="InterPro"/>
</dbReference>
<dbReference type="GO" id="GO:0019843">
    <property type="term" value="F:rRNA binding"/>
    <property type="evidence" value="ECO:0007669"/>
    <property type="project" value="UniProtKB-UniRule"/>
</dbReference>
<dbReference type="GO" id="GO:0003735">
    <property type="term" value="F:structural constituent of ribosome"/>
    <property type="evidence" value="ECO:0007669"/>
    <property type="project" value="InterPro"/>
</dbReference>
<dbReference type="GO" id="GO:0006412">
    <property type="term" value="P:translation"/>
    <property type="evidence" value="ECO:0007669"/>
    <property type="project" value="UniProtKB-UniRule"/>
</dbReference>
<dbReference type="FunFam" id="3.30.160.20:FF:000001">
    <property type="entry name" value="30S ribosomal protein S5"/>
    <property type="match status" value="1"/>
</dbReference>
<dbReference type="FunFam" id="3.30.230.10:FF:000002">
    <property type="entry name" value="30S ribosomal protein S5"/>
    <property type="match status" value="1"/>
</dbReference>
<dbReference type="Gene3D" id="3.30.160.20">
    <property type="match status" value="1"/>
</dbReference>
<dbReference type="Gene3D" id="3.30.230.10">
    <property type="match status" value="1"/>
</dbReference>
<dbReference type="HAMAP" id="MF_01307_B">
    <property type="entry name" value="Ribosomal_uS5_B"/>
    <property type="match status" value="1"/>
</dbReference>
<dbReference type="InterPro" id="IPR020568">
    <property type="entry name" value="Ribosomal_Su5_D2-typ_SF"/>
</dbReference>
<dbReference type="InterPro" id="IPR000851">
    <property type="entry name" value="Ribosomal_uS5"/>
</dbReference>
<dbReference type="InterPro" id="IPR005712">
    <property type="entry name" value="Ribosomal_uS5_bac-type"/>
</dbReference>
<dbReference type="InterPro" id="IPR005324">
    <property type="entry name" value="Ribosomal_uS5_C"/>
</dbReference>
<dbReference type="InterPro" id="IPR013810">
    <property type="entry name" value="Ribosomal_uS5_N"/>
</dbReference>
<dbReference type="InterPro" id="IPR018192">
    <property type="entry name" value="Ribosomal_uS5_N_CS"/>
</dbReference>
<dbReference type="InterPro" id="IPR014721">
    <property type="entry name" value="Ribsml_uS5_D2-typ_fold_subgr"/>
</dbReference>
<dbReference type="NCBIfam" id="TIGR01021">
    <property type="entry name" value="rpsE_bact"/>
    <property type="match status" value="1"/>
</dbReference>
<dbReference type="PANTHER" id="PTHR48277">
    <property type="entry name" value="MITOCHONDRIAL RIBOSOMAL PROTEIN S5"/>
    <property type="match status" value="1"/>
</dbReference>
<dbReference type="PANTHER" id="PTHR48277:SF1">
    <property type="entry name" value="MITOCHONDRIAL RIBOSOMAL PROTEIN S5"/>
    <property type="match status" value="1"/>
</dbReference>
<dbReference type="Pfam" id="PF00333">
    <property type="entry name" value="Ribosomal_S5"/>
    <property type="match status" value="1"/>
</dbReference>
<dbReference type="Pfam" id="PF03719">
    <property type="entry name" value="Ribosomal_S5_C"/>
    <property type="match status" value="1"/>
</dbReference>
<dbReference type="SUPFAM" id="SSF54768">
    <property type="entry name" value="dsRNA-binding domain-like"/>
    <property type="match status" value="1"/>
</dbReference>
<dbReference type="SUPFAM" id="SSF54211">
    <property type="entry name" value="Ribosomal protein S5 domain 2-like"/>
    <property type="match status" value="1"/>
</dbReference>
<dbReference type="PROSITE" id="PS00585">
    <property type="entry name" value="RIBOSOMAL_S5"/>
    <property type="match status" value="1"/>
</dbReference>
<dbReference type="PROSITE" id="PS50881">
    <property type="entry name" value="S5_DSRBD"/>
    <property type="match status" value="1"/>
</dbReference>
<sequence>MAIVYNRVKSTNDLELKDRLVAINRVTKVTKGGRTFTFAAIVVVGNEDGVIGWGLGKAGEVPAAIAKGVEAAKKNLIRVPVHNGTIPHEQAASYGGASVFLKPATTGTGVKAGGAMRAVLDSVGVTDVLAKSKGSSNPHNLVKATIQALAEMRSPLMVAQNRGISVEKVFKG</sequence>
<name>RS5_PORGI</name>
<proteinExistence type="inferred from homology"/>
<organism>
    <name type="scientific">Porphyromonas gingivalis (strain ATCC BAA-308 / W83)</name>
    <dbReference type="NCBI Taxonomy" id="242619"/>
    <lineage>
        <taxon>Bacteria</taxon>
        <taxon>Pseudomonadati</taxon>
        <taxon>Bacteroidota</taxon>
        <taxon>Bacteroidia</taxon>
        <taxon>Bacteroidales</taxon>
        <taxon>Porphyromonadaceae</taxon>
        <taxon>Porphyromonas</taxon>
    </lineage>
</organism>
<evidence type="ECO:0000255" key="1">
    <source>
        <dbReference type="HAMAP-Rule" id="MF_01307"/>
    </source>
</evidence>
<evidence type="ECO:0000305" key="2"/>